<gene>
    <name type="ordered locus">YPR202W</name>
    <name type="ORF">P9677.1</name>
</gene>
<sequence>MEIENEQICTCIAQILHLLNSLIITFSDDDKTETGQSFVYIDGFLVKKHNNQHTIVNFETYKNKMKVSDRRKFEKANFDEFESALNNKNDLVHCPSITLFESIPTEVRSFYEDEKSGLIKVVKFRTGAMDRKRSFEKIVISVMVGKNVQKFLTFVEDEPDFQGGPIPSKYLIPKKINLMVYTLFQVHTLKFNRKDYDTLSLFYLNRGYYNELSFPCPGTLSRNSECQAERQLYDAYFH</sequence>
<proteinExistence type="uncertain"/>
<dbReference type="EMBL" id="U25841">
    <property type="protein sequence ID" value="AAB64630.1"/>
    <property type="status" value="ALT_SEQ"/>
    <property type="molecule type" value="Genomic_DNA"/>
</dbReference>
<dbReference type="EMBL" id="Z73537">
    <property type="protein sequence ID" value="CAA97888.1"/>
    <property type="molecule type" value="Genomic_DNA"/>
</dbReference>
<dbReference type="EMBL" id="BK006949">
    <property type="protein sequence ID" value="DAA11616.1"/>
    <property type="molecule type" value="Genomic_DNA"/>
</dbReference>
<dbReference type="RefSeq" id="NP_015528.1">
    <property type="nucleotide sequence ID" value="NM_001184299.1"/>
</dbReference>
<dbReference type="SMR" id="Q08993"/>
<dbReference type="BioGRID" id="36372">
    <property type="interactions" value="21"/>
</dbReference>
<dbReference type="FunCoup" id="Q08993">
    <property type="interactions" value="30"/>
</dbReference>
<dbReference type="STRING" id="4932.YPR202W"/>
<dbReference type="PaxDb" id="4932-YPR202W"/>
<dbReference type="PeptideAtlas" id="Q08993"/>
<dbReference type="EnsemblFungi" id="YPR202W_mRNA">
    <property type="protein sequence ID" value="YPR202W"/>
    <property type="gene ID" value="YPR202W"/>
</dbReference>
<dbReference type="GeneID" id="856332"/>
<dbReference type="KEGG" id="sce:YPR202W"/>
<dbReference type="AGR" id="SGD:S000006406"/>
<dbReference type="SGD" id="S000006406">
    <property type="gene designation" value="YPR202W"/>
</dbReference>
<dbReference type="VEuPathDB" id="FungiDB:YPR202W"/>
<dbReference type="GeneTree" id="ENSGT00940000153173"/>
<dbReference type="HOGENOM" id="CLU_119679_0_0_1"/>
<dbReference type="InParanoid" id="Q08993"/>
<dbReference type="OMA" id="RHNNQHT"/>
<dbReference type="OrthoDB" id="4045008at2759"/>
<dbReference type="BioCyc" id="YEAST:G3O-34322-MONOMER"/>
<dbReference type="Proteomes" id="UP000002311">
    <property type="component" value="Chromosome XVI"/>
</dbReference>
<dbReference type="RNAct" id="Q08993">
    <property type="molecule type" value="protein"/>
</dbReference>
<dbReference type="InterPro" id="IPR037240">
    <property type="entry name" value="ORC1-binding_dom"/>
</dbReference>
<dbReference type="InterPro" id="IPR021646">
    <property type="entry name" value="Sir1_ORC-binding"/>
</dbReference>
<dbReference type="InterPro" id="IPR050978">
    <property type="entry name" value="Y'_ATP-dependent_helicase"/>
</dbReference>
<dbReference type="PANTHER" id="PTHR31583">
    <property type="match status" value="1"/>
</dbReference>
<dbReference type="PANTHER" id="PTHR31583:SF2">
    <property type="match status" value="1"/>
</dbReference>
<dbReference type="Pfam" id="PF11603">
    <property type="entry name" value="Sir1"/>
    <property type="match status" value="1"/>
</dbReference>
<dbReference type="SUPFAM" id="SSF144005">
    <property type="entry name" value="ORC1-binding domain"/>
    <property type="match status" value="1"/>
</dbReference>
<evidence type="ECO:0000269" key="1">
    <source>
    </source>
</evidence>
<evidence type="ECO:0000305" key="2"/>
<name>YP202_YEAST</name>
<feature type="chain" id="PRO_0000268172" description="Putative uncharacterized protein YPR202W">
    <location>
        <begin position="1"/>
        <end position="238"/>
    </location>
</feature>
<keyword id="KW-1185">Reference proteome</keyword>
<comment type="induction">
    <text evidence="1">Down-regulated at low calcium levels.</text>
</comment>
<comment type="similarity">
    <text evidence="2">Belongs to the helicase family. Yeast subtelomeric Y' repeat subfamily.</text>
</comment>
<comment type="caution">
    <text evidence="2">Could be the product of a pseudogene. Although strongly related to DNA helicases, it lacks the helicase domains, suggesting that it has no helicase activity.</text>
</comment>
<comment type="sequence caution" evidence="2">
    <conflict type="erroneous gene model prediction">
        <sequence resource="EMBL-CDS" id="AAB64630"/>
    </conflict>
</comment>
<organism>
    <name type="scientific">Saccharomyces cerevisiae (strain ATCC 204508 / S288c)</name>
    <name type="common">Baker's yeast</name>
    <dbReference type="NCBI Taxonomy" id="559292"/>
    <lineage>
        <taxon>Eukaryota</taxon>
        <taxon>Fungi</taxon>
        <taxon>Dikarya</taxon>
        <taxon>Ascomycota</taxon>
        <taxon>Saccharomycotina</taxon>
        <taxon>Saccharomycetes</taxon>
        <taxon>Saccharomycetales</taxon>
        <taxon>Saccharomycetaceae</taxon>
        <taxon>Saccharomyces</taxon>
    </lineage>
</organism>
<protein>
    <recommendedName>
        <fullName>Putative uncharacterized protein YPR202W</fullName>
    </recommendedName>
</protein>
<reference key="1">
    <citation type="journal article" date="1997" name="Nature">
        <title>The nucleotide sequence of Saccharomyces cerevisiae chromosome XVI.</title>
        <authorList>
            <person name="Bussey H."/>
            <person name="Storms R.K."/>
            <person name="Ahmed A."/>
            <person name="Albermann K."/>
            <person name="Allen E."/>
            <person name="Ansorge W."/>
            <person name="Araujo R."/>
            <person name="Aparicio A."/>
            <person name="Barrell B.G."/>
            <person name="Badcock K."/>
            <person name="Benes V."/>
            <person name="Botstein D."/>
            <person name="Bowman S."/>
            <person name="Brueckner M."/>
            <person name="Carpenter J."/>
            <person name="Cherry J.M."/>
            <person name="Chung E."/>
            <person name="Churcher C.M."/>
            <person name="Coster F."/>
            <person name="Davis K."/>
            <person name="Davis R.W."/>
            <person name="Dietrich F.S."/>
            <person name="Delius H."/>
            <person name="DiPaolo T."/>
            <person name="Dubois E."/>
            <person name="Duesterhoeft A."/>
            <person name="Duncan M."/>
            <person name="Floeth M."/>
            <person name="Fortin N."/>
            <person name="Friesen J.D."/>
            <person name="Fritz C."/>
            <person name="Goffeau A."/>
            <person name="Hall J."/>
            <person name="Hebling U."/>
            <person name="Heumann K."/>
            <person name="Hilbert H."/>
            <person name="Hillier L.W."/>
            <person name="Hunicke-Smith S."/>
            <person name="Hyman R.W."/>
            <person name="Johnston M."/>
            <person name="Kalman S."/>
            <person name="Kleine K."/>
            <person name="Komp C."/>
            <person name="Kurdi O."/>
            <person name="Lashkari D."/>
            <person name="Lew H."/>
            <person name="Lin A."/>
            <person name="Lin D."/>
            <person name="Louis E.J."/>
            <person name="Marathe R."/>
            <person name="Messenguy F."/>
            <person name="Mewes H.-W."/>
            <person name="Mirtipati S."/>
            <person name="Moestl D."/>
            <person name="Mueller-Auer S."/>
            <person name="Namath A."/>
            <person name="Nentwich U."/>
            <person name="Oefner P."/>
            <person name="Pearson D."/>
            <person name="Petel F.X."/>
            <person name="Pohl T.M."/>
            <person name="Purnelle B."/>
            <person name="Rajandream M.A."/>
            <person name="Rechmann S."/>
            <person name="Rieger M."/>
            <person name="Riles L."/>
            <person name="Roberts D."/>
            <person name="Schaefer M."/>
            <person name="Scharfe M."/>
            <person name="Scherens B."/>
            <person name="Schramm S."/>
            <person name="Schroeder M."/>
            <person name="Sdicu A.-M."/>
            <person name="Tettelin H."/>
            <person name="Urrestarazu L.A."/>
            <person name="Ushinsky S."/>
            <person name="Vierendeels F."/>
            <person name="Vissers S."/>
            <person name="Voss H."/>
            <person name="Walsh S.V."/>
            <person name="Wambutt R."/>
            <person name="Wang Y."/>
            <person name="Wedler E."/>
            <person name="Wedler H."/>
            <person name="Winnett E."/>
            <person name="Zhong W.-W."/>
            <person name="Zollner A."/>
            <person name="Vo D.H."/>
            <person name="Hani J."/>
        </authorList>
    </citation>
    <scope>NUCLEOTIDE SEQUENCE [LARGE SCALE GENOMIC DNA]</scope>
    <source>
        <strain>ATCC 204508 / S288c</strain>
    </source>
</reference>
<reference key="2">
    <citation type="journal article" date="2014" name="G3 (Bethesda)">
        <title>The reference genome sequence of Saccharomyces cerevisiae: Then and now.</title>
        <authorList>
            <person name="Engel S.R."/>
            <person name="Dietrich F.S."/>
            <person name="Fisk D.G."/>
            <person name="Binkley G."/>
            <person name="Balakrishnan R."/>
            <person name="Costanzo M.C."/>
            <person name="Dwight S.S."/>
            <person name="Hitz B.C."/>
            <person name="Karra K."/>
            <person name="Nash R.S."/>
            <person name="Weng S."/>
            <person name="Wong E.D."/>
            <person name="Lloyd P."/>
            <person name="Skrzypek M.S."/>
            <person name="Miyasato S.R."/>
            <person name="Simison M."/>
            <person name="Cherry J.M."/>
        </authorList>
    </citation>
    <scope>GENOME REANNOTATION</scope>
    <source>
        <strain>ATCC 204508 / S288c</strain>
    </source>
</reference>
<reference key="3">
    <citation type="journal article" date="2002" name="Cell Calcium">
        <title>Genome-wide analysis of yeast transcription upon calcium shortage.</title>
        <authorList>
            <person name="Lombardia L.J."/>
            <person name="Becerra M."/>
            <person name="Rodriguez-Belmonte E."/>
            <person name="Hauser N.C."/>
            <person name="Cerdan M.E."/>
        </authorList>
    </citation>
    <scope>INDUCTION</scope>
</reference>
<accession>Q08993</accession>
<accession>D6W4K0</accession>
<accession>Q06603</accession>